<sequence>MKQKVVNIGDIKVANDLPFVLFGGMNVLESRDLAMRICEHYVTVTQKLGIPYVFKASFDKANRSSIHSYRGPGLEEGMKIFQELKQTFGVKVITDVHEASQAQPVADVVDVIQLPAFLARQTDLVEAMAKTGAVINVKKPQFVSPGQMGNIVDKFHEGGNDKVILCDRGANFGYDNLVVDMLGFSVMKKVSGNSPVIFDVTHALQCRDPFGAASGGRRGQVTELARAGMAVGLAGLFLESHPDPANAKCDGPSALPLAKLEQFLTQIKAIDDLVKSFDELDTEN</sequence>
<name>KDSA_SALTI</name>
<gene>
    <name evidence="1" type="primary">kdsA</name>
    <name type="ordered locus">STY1897</name>
    <name type="ordered locus">t1104</name>
</gene>
<accession>P65216</accession>
<accession>Q8XGR9</accession>
<keyword id="KW-0963">Cytoplasm</keyword>
<keyword id="KW-0448">Lipopolysaccharide biosynthesis</keyword>
<keyword id="KW-0808">Transferase</keyword>
<feature type="chain" id="PRO_0000187163" description="2-dehydro-3-deoxyphosphooctonate aldolase">
    <location>
        <begin position="1"/>
        <end position="284"/>
    </location>
</feature>
<protein>
    <recommendedName>
        <fullName evidence="1">2-dehydro-3-deoxyphosphooctonate aldolase</fullName>
        <ecNumber evidence="1">2.5.1.55</ecNumber>
    </recommendedName>
    <alternativeName>
        <fullName evidence="1">3-deoxy-D-manno-octulosonic acid 8-phosphate synthase</fullName>
    </alternativeName>
    <alternativeName>
        <fullName evidence="1">KDO-8-phosphate synthase</fullName>
        <shortName evidence="1">KDO 8-P synthase</shortName>
        <shortName evidence="1">KDOPS</shortName>
    </alternativeName>
    <alternativeName>
        <fullName evidence="1">Phospho-2-dehydro-3-deoxyoctonate aldolase</fullName>
    </alternativeName>
</protein>
<proteinExistence type="inferred from homology"/>
<comment type="catalytic activity">
    <reaction evidence="1">
        <text>D-arabinose 5-phosphate + phosphoenolpyruvate + H2O = 3-deoxy-alpha-D-manno-2-octulosonate-8-phosphate + phosphate</text>
        <dbReference type="Rhea" id="RHEA:14053"/>
        <dbReference type="ChEBI" id="CHEBI:15377"/>
        <dbReference type="ChEBI" id="CHEBI:43474"/>
        <dbReference type="ChEBI" id="CHEBI:57693"/>
        <dbReference type="ChEBI" id="CHEBI:58702"/>
        <dbReference type="ChEBI" id="CHEBI:85985"/>
        <dbReference type="EC" id="2.5.1.55"/>
    </reaction>
</comment>
<comment type="pathway">
    <text evidence="1">Carbohydrate biosynthesis; 3-deoxy-D-manno-octulosonate biosynthesis; 3-deoxy-D-manno-octulosonate from D-ribulose 5-phosphate: step 2/3.</text>
</comment>
<comment type="pathway">
    <text evidence="1">Bacterial outer membrane biogenesis; lipopolysaccharide biosynthesis.</text>
</comment>
<comment type="subcellular location">
    <subcellularLocation>
        <location evidence="1">Cytoplasm</location>
    </subcellularLocation>
</comment>
<comment type="similarity">
    <text evidence="1">Belongs to the KdsA family.</text>
</comment>
<evidence type="ECO:0000255" key="1">
    <source>
        <dbReference type="HAMAP-Rule" id="MF_00056"/>
    </source>
</evidence>
<organism>
    <name type="scientific">Salmonella typhi</name>
    <dbReference type="NCBI Taxonomy" id="90370"/>
    <lineage>
        <taxon>Bacteria</taxon>
        <taxon>Pseudomonadati</taxon>
        <taxon>Pseudomonadota</taxon>
        <taxon>Gammaproteobacteria</taxon>
        <taxon>Enterobacterales</taxon>
        <taxon>Enterobacteriaceae</taxon>
        <taxon>Salmonella</taxon>
    </lineage>
</organism>
<reference key="1">
    <citation type="journal article" date="2001" name="Nature">
        <title>Complete genome sequence of a multiple drug resistant Salmonella enterica serovar Typhi CT18.</title>
        <authorList>
            <person name="Parkhill J."/>
            <person name="Dougan G."/>
            <person name="James K.D."/>
            <person name="Thomson N.R."/>
            <person name="Pickard D."/>
            <person name="Wain J."/>
            <person name="Churcher C.M."/>
            <person name="Mungall K.L."/>
            <person name="Bentley S.D."/>
            <person name="Holden M.T.G."/>
            <person name="Sebaihia M."/>
            <person name="Baker S."/>
            <person name="Basham D."/>
            <person name="Brooks K."/>
            <person name="Chillingworth T."/>
            <person name="Connerton P."/>
            <person name="Cronin A."/>
            <person name="Davis P."/>
            <person name="Davies R.M."/>
            <person name="Dowd L."/>
            <person name="White N."/>
            <person name="Farrar J."/>
            <person name="Feltwell T."/>
            <person name="Hamlin N."/>
            <person name="Haque A."/>
            <person name="Hien T.T."/>
            <person name="Holroyd S."/>
            <person name="Jagels K."/>
            <person name="Krogh A."/>
            <person name="Larsen T.S."/>
            <person name="Leather S."/>
            <person name="Moule S."/>
            <person name="O'Gaora P."/>
            <person name="Parry C."/>
            <person name="Quail M.A."/>
            <person name="Rutherford K.M."/>
            <person name="Simmonds M."/>
            <person name="Skelton J."/>
            <person name="Stevens K."/>
            <person name="Whitehead S."/>
            <person name="Barrell B.G."/>
        </authorList>
    </citation>
    <scope>NUCLEOTIDE SEQUENCE [LARGE SCALE GENOMIC DNA]</scope>
    <source>
        <strain>CT18</strain>
    </source>
</reference>
<reference key="2">
    <citation type="journal article" date="2003" name="J. Bacteriol.">
        <title>Comparative genomics of Salmonella enterica serovar Typhi strains Ty2 and CT18.</title>
        <authorList>
            <person name="Deng W."/>
            <person name="Liou S.-R."/>
            <person name="Plunkett G. III"/>
            <person name="Mayhew G.F."/>
            <person name="Rose D.J."/>
            <person name="Burland V."/>
            <person name="Kodoyianni V."/>
            <person name="Schwartz D.C."/>
            <person name="Blattner F.R."/>
        </authorList>
    </citation>
    <scope>NUCLEOTIDE SEQUENCE [LARGE SCALE GENOMIC DNA]</scope>
    <source>
        <strain>ATCC 700931 / Ty2</strain>
    </source>
</reference>
<dbReference type="EC" id="2.5.1.55" evidence="1"/>
<dbReference type="EMBL" id="AL513382">
    <property type="protein sequence ID" value="CAD02127.1"/>
    <property type="molecule type" value="Genomic_DNA"/>
</dbReference>
<dbReference type="EMBL" id="AE014613">
    <property type="protein sequence ID" value="AAO68767.1"/>
    <property type="molecule type" value="Genomic_DNA"/>
</dbReference>
<dbReference type="RefSeq" id="NP_456282.1">
    <property type="nucleotide sequence ID" value="NC_003198.1"/>
</dbReference>
<dbReference type="RefSeq" id="WP_000811046.1">
    <property type="nucleotide sequence ID" value="NZ_WSUR01000004.1"/>
</dbReference>
<dbReference type="SMR" id="P65216"/>
<dbReference type="STRING" id="220341.gene:17585821"/>
<dbReference type="KEGG" id="stt:t1104"/>
<dbReference type="KEGG" id="sty:STY1897"/>
<dbReference type="PATRIC" id="fig|220341.7.peg.1911"/>
<dbReference type="eggNOG" id="COG2877">
    <property type="taxonomic scope" value="Bacteria"/>
</dbReference>
<dbReference type="HOGENOM" id="CLU_036666_0_0_6"/>
<dbReference type="OMA" id="FGYHNLV"/>
<dbReference type="OrthoDB" id="9776934at2"/>
<dbReference type="UniPathway" id="UPA00030"/>
<dbReference type="UniPathway" id="UPA00357">
    <property type="reaction ID" value="UER00474"/>
</dbReference>
<dbReference type="Proteomes" id="UP000000541">
    <property type="component" value="Chromosome"/>
</dbReference>
<dbReference type="Proteomes" id="UP000002670">
    <property type="component" value="Chromosome"/>
</dbReference>
<dbReference type="GO" id="GO:0005737">
    <property type="term" value="C:cytoplasm"/>
    <property type="evidence" value="ECO:0007669"/>
    <property type="project" value="UniProtKB-SubCell"/>
</dbReference>
<dbReference type="GO" id="GO:0008676">
    <property type="term" value="F:3-deoxy-8-phosphooctulonate synthase activity"/>
    <property type="evidence" value="ECO:0007669"/>
    <property type="project" value="UniProtKB-UniRule"/>
</dbReference>
<dbReference type="GO" id="GO:0019294">
    <property type="term" value="P:keto-3-deoxy-D-manno-octulosonic acid biosynthetic process"/>
    <property type="evidence" value="ECO:0007669"/>
    <property type="project" value="UniProtKB-UniRule"/>
</dbReference>
<dbReference type="FunFam" id="3.20.20.70:FF:000058">
    <property type="entry name" value="2-dehydro-3-deoxyphosphooctonate aldolase"/>
    <property type="match status" value="1"/>
</dbReference>
<dbReference type="Gene3D" id="3.20.20.70">
    <property type="entry name" value="Aldolase class I"/>
    <property type="match status" value="1"/>
</dbReference>
<dbReference type="HAMAP" id="MF_00056">
    <property type="entry name" value="KDO8P_synth"/>
    <property type="match status" value="1"/>
</dbReference>
<dbReference type="InterPro" id="IPR013785">
    <property type="entry name" value="Aldolase_TIM"/>
</dbReference>
<dbReference type="InterPro" id="IPR006218">
    <property type="entry name" value="DAHP1/KDSA"/>
</dbReference>
<dbReference type="InterPro" id="IPR006269">
    <property type="entry name" value="KDO8P_synthase"/>
</dbReference>
<dbReference type="NCBIfam" id="TIGR01362">
    <property type="entry name" value="KDO8P_synth"/>
    <property type="match status" value="1"/>
</dbReference>
<dbReference type="NCBIfam" id="NF003543">
    <property type="entry name" value="PRK05198.1"/>
    <property type="match status" value="1"/>
</dbReference>
<dbReference type="NCBIfam" id="NF009109">
    <property type="entry name" value="PRK12457.1"/>
    <property type="match status" value="1"/>
</dbReference>
<dbReference type="PANTHER" id="PTHR21057">
    <property type="entry name" value="PHOSPHO-2-DEHYDRO-3-DEOXYHEPTONATE ALDOLASE"/>
    <property type="match status" value="1"/>
</dbReference>
<dbReference type="Pfam" id="PF00793">
    <property type="entry name" value="DAHP_synth_1"/>
    <property type="match status" value="1"/>
</dbReference>
<dbReference type="SUPFAM" id="SSF51569">
    <property type="entry name" value="Aldolase"/>
    <property type="match status" value="1"/>
</dbReference>